<dbReference type="EMBL" id="AL009126">
    <property type="protein sequence ID" value="CAB14052.1"/>
    <property type="molecule type" value="Genomic_DNA"/>
</dbReference>
<dbReference type="RefSeq" id="NP_390017.1">
    <property type="nucleotide sequence ID" value="NC_000964.3"/>
</dbReference>
<dbReference type="RefSeq" id="WP_003246141.1">
    <property type="nucleotide sequence ID" value="NZ_OZ025638.1"/>
</dbReference>
<dbReference type="SMR" id="O31975"/>
<dbReference type="FunCoup" id="O31975">
    <property type="interactions" value="14"/>
</dbReference>
<dbReference type="STRING" id="224308.BSU21340"/>
<dbReference type="PaxDb" id="224308-BSU21340"/>
<dbReference type="EnsemblBacteria" id="CAB14052">
    <property type="protein sequence ID" value="CAB14052"/>
    <property type="gene ID" value="BSU_21340"/>
</dbReference>
<dbReference type="GeneID" id="939133"/>
<dbReference type="KEGG" id="bsu:BSU21340"/>
<dbReference type="PATRIC" id="fig|224308.179.peg.2330"/>
<dbReference type="eggNOG" id="ENOG5032TH6">
    <property type="taxonomic scope" value="Bacteria"/>
</dbReference>
<dbReference type="InParanoid" id="O31975"/>
<dbReference type="OrthoDB" id="2882981at2"/>
<dbReference type="BioCyc" id="BSUB:BSU21340-MONOMER"/>
<dbReference type="Proteomes" id="UP000001570">
    <property type="component" value="Chromosome"/>
</dbReference>
<dbReference type="GO" id="GO:0005886">
    <property type="term" value="C:plasma membrane"/>
    <property type="evidence" value="ECO:0007669"/>
    <property type="project" value="UniProtKB-SubCell"/>
</dbReference>
<reference key="1">
    <citation type="journal article" date="1997" name="Nature">
        <title>The complete genome sequence of the Gram-positive bacterium Bacillus subtilis.</title>
        <authorList>
            <person name="Kunst F."/>
            <person name="Ogasawara N."/>
            <person name="Moszer I."/>
            <person name="Albertini A.M."/>
            <person name="Alloni G."/>
            <person name="Azevedo V."/>
            <person name="Bertero M.G."/>
            <person name="Bessieres P."/>
            <person name="Bolotin A."/>
            <person name="Borchert S."/>
            <person name="Borriss R."/>
            <person name="Boursier L."/>
            <person name="Brans A."/>
            <person name="Braun M."/>
            <person name="Brignell S.C."/>
            <person name="Bron S."/>
            <person name="Brouillet S."/>
            <person name="Bruschi C.V."/>
            <person name="Caldwell B."/>
            <person name="Capuano V."/>
            <person name="Carter N.M."/>
            <person name="Choi S.-K."/>
            <person name="Codani J.-J."/>
            <person name="Connerton I.F."/>
            <person name="Cummings N.J."/>
            <person name="Daniel R.A."/>
            <person name="Denizot F."/>
            <person name="Devine K.M."/>
            <person name="Duesterhoeft A."/>
            <person name="Ehrlich S.D."/>
            <person name="Emmerson P.T."/>
            <person name="Entian K.-D."/>
            <person name="Errington J."/>
            <person name="Fabret C."/>
            <person name="Ferrari E."/>
            <person name="Foulger D."/>
            <person name="Fritz C."/>
            <person name="Fujita M."/>
            <person name="Fujita Y."/>
            <person name="Fuma S."/>
            <person name="Galizzi A."/>
            <person name="Galleron N."/>
            <person name="Ghim S.-Y."/>
            <person name="Glaser P."/>
            <person name="Goffeau A."/>
            <person name="Golightly E.J."/>
            <person name="Grandi G."/>
            <person name="Guiseppi G."/>
            <person name="Guy B.J."/>
            <person name="Haga K."/>
            <person name="Haiech J."/>
            <person name="Harwood C.R."/>
            <person name="Henaut A."/>
            <person name="Hilbert H."/>
            <person name="Holsappel S."/>
            <person name="Hosono S."/>
            <person name="Hullo M.-F."/>
            <person name="Itaya M."/>
            <person name="Jones L.-M."/>
            <person name="Joris B."/>
            <person name="Karamata D."/>
            <person name="Kasahara Y."/>
            <person name="Klaerr-Blanchard M."/>
            <person name="Klein C."/>
            <person name="Kobayashi Y."/>
            <person name="Koetter P."/>
            <person name="Koningstein G."/>
            <person name="Krogh S."/>
            <person name="Kumano M."/>
            <person name="Kurita K."/>
            <person name="Lapidus A."/>
            <person name="Lardinois S."/>
            <person name="Lauber J."/>
            <person name="Lazarevic V."/>
            <person name="Lee S.-M."/>
            <person name="Levine A."/>
            <person name="Liu H."/>
            <person name="Masuda S."/>
            <person name="Mauel C."/>
            <person name="Medigue C."/>
            <person name="Medina N."/>
            <person name="Mellado R.P."/>
            <person name="Mizuno M."/>
            <person name="Moestl D."/>
            <person name="Nakai S."/>
            <person name="Noback M."/>
            <person name="Noone D."/>
            <person name="O'Reilly M."/>
            <person name="Ogawa K."/>
            <person name="Ogiwara A."/>
            <person name="Oudega B."/>
            <person name="Park S.-H."/>
            <person name="Parro V."/>
            <person name="Pohl T.M."/>
            <person name="Portetelle D."/>
            <person name="Porwollik S."/>
            <person name="Prescott A.M."/>
            <person name="Presecan E."/>
            <person name="Pujic P."/>
            <person name="Purnelle B."/>
            <person name="Rapoport G."/>
            <person name="Rey M."/>
            <person name="Reynolds S."/>
            <person name="Rieger M."/>
            <person name="Rivolta C."/>
            <person name="Rocha E."/>
            <person name="Roche B."/>
            <person name="Rose M."/>
            <person name="Sadaie Y."/>
            <person name="Sato T."/>
            <person name="Scanlan E."/>
            <person name="Schleich S."/>
            <person name="Schroeter R."/>
            <person name="Scoffone F."/>
            <person name="Sekiguchi J."/>
            <person name="Sekowska A."/>
            <person name="Seror S.J."/>
            <person name="Serror P."/>
            <person name="Shin B.-S."/>
            <person name="Soldo B."/>
            <person name="Sorokin A."/>
            <person name="Tacconi E."/>
            <person name="Takagi T."/>
            <person name="Takahashi H."/>
            <person name="Takemaru K."/>
            <person name="Takeuchi M."/>
            <person name="Tamakoshi A."/>
            <person name="Tanaka T."/>
            <person name="Terpstra P."/>
            <person name="Tognoni A."/>
            <person name="Tosato V."/>
            <person name="Uchiyama S."/>
            <person name="Vandenbol M."/>
            <person name="Vannier F."/>
            <person name="Vassarotti A."/>
            <person name="Viari A."/>
            <person name="Wambutt R."/>
            <person name="Wedler E."/>
            <person name="Wedler H."/>
            <person name="Weitzenegger T."/>
            <person name="Winters P."/>
            <person name="Wipat A."/>
            <person name="Yamamoto H."/>
            <person name="Yamane K."/>
            <person name="Yasumoto K."/>
            <person name="Yata K."/>
            <person name="Yoshida K."/>
            <person name="Yoshikawa H.-F."/>
            <person name="Zumstein E."/>
            <person name="Yoshikawa H."/>
            <person name="Danchin A."/>
        </authorList>
    </citation>
    <scope>NUCLEOTIDE SEQUENCE [LARGE SCALE GENOMIC DNA]</scope>
    <source>
        <strain>168</strain>
    </source>
</reference>
<protein>
    <recommendedName>
        <fullName>SPbeta prophage-derived uncharacterized membrane protein YomJ</fullName>
    </recommendedName>
</protein>
<gene>
    <name type="primary">yomJ</name>
    <name type="ordered locus">BSU21340</name>
</gene>
<proteinExistence type="predicted"/>
<name>YOMJ_BACSU</name>
<evidence type="ECO:0000255" key="1"/>
<evidence type="ECO:0000305" key="2"/>
<comment type="subcellular location">
    <subcellularLocation>
        <location evidence="2">Cell membrane</location>
        <topology evidence="2">Multi-pass membrane protein</topology>
    </subcellularLocation>
</comment>
<accession>O31975</accession>
<keyword id="KW-1003">Cell membrane</keyword>
<keyword id="KW-0472">Membrane</keyword>
<keyword id="KW-1185">Reference proteome</keyword>
<keyword id="KW-0812">Transmembrane</keyword>
<keyword id="KW-1133">Transmembrane helix</keyword>
<sequence>MGYKFMAYGGYFLFCLFFLLMDGWRGMGICLIIVGLALLALEPYKIKAQKNIDKLKENAETLKHFDGGFNPDNFFNTYKTKIAFKESDSLVKIYQLNKDEHIEEYTIPFSNVIESEIALDNQIISKVSKSGIVAGGLLAGGIGAAIGGLSASSIQNEMVKSVTLKITVEDLGKPIHYIDFLPTQEVEGYNIQGYKKDSNVIQQALTNAEYWHGVMDVIIKKANKVAQ</sequence>
<organism>
    <name type="scientific">Bacillus subtilis (strain 168)</name>
    <dbReference type="NCBI Taxonomy" id="224308"/>
    <lineage>
        <taxon>Bacteria</taxon>
        <taxon>Bacillati</taxon>
        <taxon>Bacillota</taxon>
        <taxon>Bacilli</taxon>
        <taxon>Bacillales</taxon>
        <taxon>Bacillaceae</taxon>
        <taxon>Bacillus</taxon>
    </lineage>
</organism>
<feature type="chain" id="PRO_0000369424" description="SPbeta prophage-derived uncharacterized membrane protein YomJ">
    <location>
        <begin position="1"/>
        <end position="227"/>
    </location>
</feature>
<feature type="transmembrane region" description="Helical" evidence="1">
    <location>
        <begin position="16"/>
        <end position="36"/>
    </location>
</feature>
<feature type="transmembrane region" description="Helical" evidence="1">
    <location>
        <begin position="131"/>
        <end position="151"/>
    </location>
</feature>